<sequence length="317" mass="35160">MKTISVVTLLCVLPAVVYSTCTVPTMNNAKLTSTETSFNDKQKVTFTCDQGYHSSDPNAVCETDKWKYENPCKKMCTVSDYISELYNKPLYEVNSTMTLSCNGETKYFRCEEKNGNTSWNDTVTCPNAECQPLQLEHGSCQPVKEKYSFGEYMTINCDVGYEVIGASYISCTANSWNVIPSCQQKCDMPSLSNGLISGSTFSIGGVIHLSCKSGFILTGSPSSTCIDGKWNPVLPICVRTNEEFDPVDDGPDDETDLSKLSKDVVQYEQEIESLEATYHIIMVALTIMGVIFLISVIVLVCSCDKNNDQYKFHKLLP</sequence>
<keyword id="KW-1015">Disulfide bond</keyword>
<keyword id="KW-0244">Early protein</keyword>
<keyword id="KW-1040">Host Golgi apparatus</keyword>
<keyword id="KW-0449">Lipoprotein</keyword>
<keyword id="KW-0472">Membrane</keyword>
<keyword id="KW-0564">Palmitate</keyword>
<keyword id="KW-0677">Repeat</keyword>
<keyword id="KW-0732">Signal</keyword>
<keyword id="KW-0768">Sushi</keyword>
<keyword id="KW-0812">Transmembrane</keyword>
<keyword id="KW-1133">Transmembrane helix</keyword>
<keyword id="KW-0946">Virion</keyword>
<feature type="signal peptide" evidence="2">
    <location>
        <begin position="1"/>
        <end position="17"/>
    </location>
</feature>
<feature type="chain" id="PRO_0000006019" description="Protein OPG190">
    <location>
        <begin position="18"/>
        <end position="317"/>
    </location>
</feature>
<feature type="transmembrane region" description="Helical" evidence="2">
    <location>
        <begin position="280"/>
        <end position="300"/>
    </location>
</feature>
<feature type="domain" description="Sushi 1" evidence="3">
    <location>
        <begin position="19"/>
        <end position="74"/>
    </location>
</feature>
<feature type="domain" description="Sushi 2" evidence="3">
    <location>
        <begin position="75"/>
        <end position="126"/>
    </location>
</feature>
<feature type="domain" description="Sushi 3" evidence="3">
    <location>
        <begin position="127"/>
        <end position="184"/>
    </location>
</feature>
<feature type="domain" description="Sushi 4" evidence="3">
    <location>
        <begin position="185"/>
        <end position="239"/>
    </location>
</feature>
<feature type="lipid moiety-binding region" description="S-palmitoyl cysteine; by host" evidence="1">
    <location>
        <position position="301"/>
    </location>
</feature>
<feature type="lipid moiety-binding region" description="S-palmitoyl cysteine; by host" evidence="1">
    <location>
        <position position="303"/>
    </location>
</feature>
<feature type="disulfide bond" evidence="3">
    <location>
        <begin position="21"/>
        <end position="61"/>
    </location>
</feature>
<feature type="disulfide bond" evidence="3">
    <location>
        <begin position="48"/>
        <end position="72"/>
    </location>
</feature>
<feature type="disulfide bond" evidence="3">
    <location>
        <begin position="76"/>
        <end position="110"/>
    </location>
</feature>
<feature type="disulfide bond" evidence="3">
    <location>
        <begin position="101"/>
        <end position="125"/>
    </location>
</feature>
<feature type="disulfide bond" evidence="3">
    <location>
        <begin position="130"/>
        <end position="171"/>
    </location>
</feature>
<feature type="disulfide bond" evidence="3">
    <location>
        <begin position="157"/>
        <end position="182"/>
    </location>
</feature>
<feature type="disulfide bond" evidence="3">
    <location>
        <begin position="186"/>
        <end position="225"/>
    </location>
</feature>
<feature type="disulfide bond" evidence="3">
    <location>
        <begin position="211"/>
        <end position="237"/>
    </location>
</feature>
<reference key="1">
    <citation type="submission" date="1998-09" db="EMBL/GenBank/DDBJ databases">
        <title>Complete genomic sequence of vaccinia virus (Tian Tan strain).</title>
        <authorList>
            <person name="Jin Q."/>
            <person name="Hou Y.D."/>
            <person name="Cheng N.H."/>
            <person name="Yao E.M."/>
            <person name="Cheng S.X."/>
            <person name="Yang X.K."/>
            <person name="Jing D.Y."/>
            <person name="Yu W.H."/>
            <person name="Yuan J.S."/>
            <person name="Ma X.J."/>
        </authorList>
    </citation>
    <scope>NUCLEOTIDE SEQUENCE [LARGE SCALE GENOMIC DNA]</scope>
</reference>
<name>PG190_VACCT</name>
<organismHost>
    <name type="scientific">Homo sapiens</name>
    <name type="common">Human</name>
    <dbReference type="NCBI Taxonomy" id="9606"/>
</organismHost>
<dbReference type="EMBL" id="AF095689">
    <property type="protein sequence ID" value="AAF34074.1"/>
    <property type="molecule type" value="Genomic_DNA"/>
</dbReference>
<dbReference type="SMR" id="Q9JF44"/>
<dbReference type="Proteomes" id="UP000163220">
    <property type="component" value="Genome"/>
</dbReference>
<dbReference type="GO" id="GO:0044177">
    <property type="term" value="C:host cell Golgi apparatus"/>
    <property type="evidence" value="ECO:0007669"/>
    <property type="project" value="UniProtKB-SubCell"/>
</dbReference>
<dbReference type="GO" id="GO:0016020">
    <property type="term" value="C:membrane"/>
    <property type="evidence" value="ECO:0007669"/>
    <property type="project" value="UniProtKB-KW"/>
</dbReference>
<dbReference type="GO" id="GO:0055036">
    <property type="term" value="C:virion membrane"/>
    <property type="evidence" value="ECO:0007669"/>
    <property type="project" value="UniProtKB-SubCell"/>
</dbReference>
<dbReference type="GO" id="GO:0001848">
    <property type="term" value="F:complement binding"/>
    <property type="evidence" value="ECO:0007669"/>
    <property type="project" value="InterPro"/>
</dbReference>
<dbReference type="GO" id="GO:0045916">
    <property type="term" value="P:negative regulation of complement activation"/>
    <property type="evidence" value="ECO:0007669"/>
    <property type="project" value="InterPro"/>
</dbReference>
<dbReference type="CDD" id="cd00033">
    <property type="entry name" value="CCP"/>
    <property type="match status" value="3"/>
</dbReference>
<dbReference type="Gene3D" id="2.10.70.10">
    <property type="entry name" value="Complement Module, domain 1"/>
    <property type="match status" value="3"/>
</dbReference>
<dbReference type="InterPro" id="IPR011176">
    <property type="entry name" value="CCP_VACV_C3/B5"/>
</dbReference>
<dbReference type="InterPro" id="IPR051503">
    <property type="entry name" value="ComplSys_Reg/VirEntry_Med"/>
</dbReference>
<dbReference type="InterPro" id="IPR035976">
    <property type="entry name" value="Sushi/SCR/CCP_sf"/>
</dbReference>
<dbReference type="InterPro" id="IPR000436">
    <property type="entry name" value="Sushi_SCR_CCP_dom"/>
</dbReference>
<dbReference type="PANTHER" id="PTHR45785">
    <property type="entry name" value="COMPLEMENT FACTOR H-RELATED"/>
    <property type="match status" value="1"/>
</dbReference>
<dbReference type="PANTHER" id="PTHR45785:SF2">
    <property type="entry name" value="COMPLEMENT FACTOR H-RELATED"/>
    <property type="match status" value="1"/>
</dbReference>
<dbReference type="Pfam" id="PF00084">
    <property type="entry name" value="Sushi"/>
    <property type="match status" value="3"/>
</dbReference>
<dbReference type="PIRSF" id="PIRSF002486">
    <property type="entry name" value="CIP_VAC_C3L"/>
    <property type="match status" value="1"/>
</dbReference>
<dbReference type="SMART" id="SM00032">
    <property type="entry name" value="CCP"/>
    <property type="match status" value="4"/>
</dbReference>
<dbReference type="SUPFAM" id="SSF57535">
    <property type="entry name" value="Complement control module/SCR domain"/>
    <property type="match status" value="3"/>
</dbReference>
<dbReference type="PROSITE" id="PS50923">
    <property type="entry name" value="SUSHI"/>
    <property type="match status" value="3"/>
</dbReference>
<accession>Q9JF44</accession>
<organism>
    <name type="scientific">Vaccinia virus (strain Tian Tan)</name>
    <name type="common">VACV</name>
    <dbReference type="NCBI Taxonomy" id="10253"/>
    <lineage>
        <taxon>Viruses</taxon>
        <taxon>Varidnaviria</taxon>
        <taxon>Bamfordvirae</taxon>
        <taxon>Nucleocytoviricota</taxon>
        <taxon>Pokkesviricetes</taxon>
        <taxon>Chitovirales</taxon>
        <taxon>Poxviridae</taxon>
        <taxon>Chordopoxvirinae</taxon>
        <taxon>Orthopoxvirus</taxon>
        <taxon>Vaccinia virus</taxon>
    </lineage>
</organism>
<evidence type="ECO:0000250" key="1">
    <source>
        <dbReference type="UniProtKB" id="Q01227"/>
    </source>
</evidence>
<evidence type="ECO:0000255" key="2"/>
<evidence type="ECO:0000255" key="3">
    <source>
        <dbReference type="PROSITE-ProRule" id="PRU00302"/>
    </source>
</evidence>
<evidence type="ECO:0000305" key="4"/>
<comment type="function">
    <text evidence="1">Plays a role in the dissolution of the outermost membrane of extracellular enveloped virions (EV) to allow virion entry into host cells. Also participates in wrapping mature virions (MV) to form enveloped virions (EV).</text>
</comment>
<comment type="subunit">
    <text evidence="1">Interacts with OPG161; this interaction is required for efficient targeting of OPG161 and OPG190 into enveloped virions. Interacts with OPG162; this interaction is required for the correct glycosylation, trafficking and stability of OPG162 and OPG190 incorporation into extracellular enveloped virions. Interacts with envelope phospholipase OPG057.</text>
</comment>
<comment type="subcellular location">
    <subcellularLocation>
        <location evidence="1">Virion membrane</location>
        <topology evidence="1">Single-pass type I membrane protein</topology>
    </subcellularLocation>
    <subcellularLocation>
        <location evidence="1">Host Golgi apparatus</location>
        <location evidence="1">Host trans-Golgi network</location>
    </subcellularLocation>
    <text evidence="1">OPG190 is found on enveloped virion (EV) membranes.</text>
</comment>
<comment type="induction">
    <text>Expressed in the early phase of the viral replicative cycle.</text>
</comment>
<comment type="similarity">
    <text evidence="4">Belongs to the receptors of complement activation (RCA) family.</text>
</comment>
<protein>
    <recommendedName>
        <fullName>Protein OPG190</fullName>
    </recommendedName>
    <alternativeName>
        <fullName>Plaque-size/host range protein</fullName>
    </alternativeName>
</protein>
<proteinExistence type="evidence at transcript level"/>
<gene>
    <name type="primary">OPG190</name>
    <name type="synonym">PS/HR</name>
    <name type="ORF">TB5R</name>
</gene>